<reference key="1">
    <citation type="submission" date="2007-02" db="EMBL/GenBank/DDBJ databases">
        <authorList>
            <consortium name="NIH - Mammalian Gene Collection (MGC) project"/>
        </authorList>
    </citation>
    <scope>NUCLEOTIDE SEQUENCE [LARGE SCALE MRNA]</scope>
    <source>
        <strain>Hereford</strain>
        <tissue>Fetal skin</tissue>
    </source>
</reference>
<proteinExistence type="evidence at protein level"/>
<sequence length="176" mass="19146">MSAGGAPVPPPPNPAMSFPAPRVTLPAGPDILRTYSGAFVCLEIVFGGLVWILVASSNVPLPLLQGWVMFVSVTAFVCSLLFLGVFLSGVVTQINANWNFLDFAYHFTVFVFYFGAFLLEAATTSLHDLRCNRTMTVQPLLSDNQYNINVAATIFAFVTTACYGCSLGLALRRWRP</sequence>
<comment type="function">
    <text evidence="1">Member of the machinery of polarized transport. Required for the indirect transcytotic route at the step of the egress of the transcytosing cargo from perinuclear endosomes in order for it to travel to the apical surface via a raft-dependent pathway (By similarity).</text>
</comment>
<comment type="subunit">
    <text evidence="1">Interacts with TPD52L2.</text>
</comment>
<comment type="subcellular location">
    <subcellularLocation>
        <location evidence="1">Cell membrane</location>
        <topology evidence="1">Multi-pass membrane protein</topology>
    </subcellularLocation>
    <subcellularLocation>
        <location evidence="1">Apical cell membrane</location>
        <topology evidence="1">Multi-pass membrane protein</topology>
    </subcellularLocation>
    <text evidence="1">Associated with lipid rafts. In polarized epithelial cells, restricted to the apical surface (By similarity).</text>
</comment>
<comment type="similarity">
    <text evidence="4">Belongs to the MAL family.</text>
</comment>
<feature type="chain" id="PRO_0000332209" description="Protein MAL2">
    <location>
        <begin position="1"/>
        <end position="176"/>
    </location>
</feature>
<feature type="topological domain" description="Cytoplasmic" evidence="2">
    <location>
        <begin position="1"/>
        <end position="34"/>
    </location>
</feature>
<feature type="transmembrane region" description="Helical" evidence="2">
    <location>
        <begin position="35"/>
        <end position="55"/>
    </location>
</feature>
<feature type="topological domain" description="Lumenal" evidence="2">
    <location>
        <begin position="56"/>
        <end position="66"/>
    </location>
</feature>
<feature type="transmembrane region" description="Helical" evidence="2">
    <location>
        <begin position="67"/>
        <end position="87"/>
    </location>
</feature>
<feature type="topological domain" description="Cytoplasmic" evidence="2">
    <location>
        <begin position="88"/>
        <end position="102"/>
    </location>
</feature>
<feature type="transmembrane region" description="Helical" evidence="2">
    <location>
        <begin position="103"/>
        <end position="123"/>
    </location>
</feature>
<feature type="topological domain" description="Lumenal" evidence="2">
    <location>
        <begin position="124"/>
        <end position="149"/>
    </location>
</feature>
<feature type="transmembrane region" description="Helical" evidence="2">
    <location>
        <begin position="150"/>
        <end position="170"/>
    </location>
</feature>
<feature type="topological domain" description="Cytoplasmic" evidence="2">
    <location>
        <begin position="171"/>
        <end position="176"/>
    </location>
</feature>
<feature type="domain" description="MARVEL" evidence="3">
    <location>
        <begin position="31"/>
        <end position="175"/>
    </location>
</feature>
<feature type="glycosylation site" description="N-linked (GlcNAc...) asparagine">
    <location>
        <position position="132"/>
    </location>
</feature>
<evidence type="ECO:0000250" key="1"/>
<evidence type="ECO:0000255" key="2"/>
<evidence type="ECO:0000255" key="3">
    <source>
        <dbReference type="PROSITE-ProRule" id="PRU00581"/>
    </source>
</evidence>
<evidence type="ECO:0000305" key="4"/>
<organism>
    <name type="scientific">Bos taurus</name>
    <name type="common">Bovine</name>
    <dbReference type="NCBI Taxonomy" id="9913"/>
    <lineage>
        <taxon>Eukaryota</taxon>
        <taxon>Metazoa</taxon>
        <taxon>Chordata</taxon>
        <taxon>Craniata</taxon>
        <taxon>Vertebrata</taxon>
        <taxon>Euteleostomi</taxon>
        <taxon>Mammalia</taxon>
        <taxon>Eutheria</taxon>
        <taxon>Laurasiatheria</taxon>
        <taxon>Artiodactyla</taxon>
        <taxon>Ruminantia</taxon>
        <taxon>Pecora</taxon>
        <taxon>Bovidae</taxon>
        <taxon>Bovinae</taxon>
        <taxon>Bos</taxon>
    </lineage>
</organism>
<dbReference type="EMBL" id="BC133516">
    <property type="protein sequence ID" value="AAI33517.1"/>
    <property type="molecule type" value="mRNA"/>
</dbReference>
<dbReference type="RefSeq" id="NP_001075188.1">
    <property type="nucleotide sequence ID" value="NM_001081719.1"/>
</dbReference>
<dbReference type="SMR" id="A2VE13"/>
<dbReference type="FunCoup" id="A2VE13">
    <property type="interactions" value="153"/>
</dbReference>
<dbReference type="STRING" id="9913.ENSBTAP00000015638"/>
<dbReference type="GlyCosmos" id="A2VE13">
    <property type="glycosylation" value="1 site, No reported glycans"/>
</dbReference>
<dbReference type="GlyGen" id="A2VE13">
    <property type="glycosylation" value="1 site"/>
</dbReference>
<dbReference type="PaxDb" id="9913-ENSBTAP00000015638"/>
<dbReference type="Ensembl" id="ENSBTAT00000015638.4">
    <property type="protein sequence ID" value="ENSBTAP00000015638.3"/>
    <property type="gene ID" value="ENSBTAG00000011779.5"/>
</dbReference>
<dbReference type="GeneID" id="511940"/>
<dbReference type="KEGG" id="bta:511940"/>
<dbReference type="CTD" id="114569"/>
<dbReference type="VEuPathDB" id="HostDB:ENSBTAG00000011779"/>
<dbReference type="VGNC" id="VGNC:54901">
    <property type="gene designation" value="MAL2"/>
</dbReference>
<dbReference type="eggNOG" id="KOG4788">
    <property type="taxonomic scope" value="Eukaryota"/>
</dbReference>
<dbReference type="GeneTree" id="ENSGT00940000159514"/>
<dbReference type="HOGENOM" id="CLU_112950_2_0_1"/>
<dbReference type="InParanoid" id="A2VE13"/>
<dbReference type="OMA" id="TTVCYGC"/>
<dbReference type="OrthoDB" id="8877859at2759"/>
<dbReference type="TreeFam" id="TF316174"/>
<dbReference type="Proteomes" id="UP000009136">
    <property type="component" value="Chromosome 14"/>
</dbReference>
<dbReference type="Bgee" id="ENSBTAG00000011779">
    <property type="expression patterns" value="Expressed in rumen papilla and 97 other cell types or tissues"/>
</dbReference>
<dbReference type="GO" id="GO:0016324">
    <property type="term" value="C:apical plasma membrane"/>
    <property type="evidence" value="ECO:0007669"/>
    <property type="project" value="UniProtKB-SubCell"/>
</dbReference>
<dbReference type="GO" id="GO:0016020">
    <property type="term" value="C:membrane"/>
    <property type="evidence" value="ECO:0000318"/>
    <property type="project" value="GO_Central"/>
</dbReference>
<dbReference type="GO" id="GO:0019911">
    <property type="term" value="F:structural constituent of myelin sheath"/>
    <property type="evidence" value="ECO:0000318"/>
    <property type="project" value="GO_Central"/>
</dbReference>
<dbReference type="GO" id="GO:0042552">
    <property type="term" value="P:myelination"/>
    <property type="evidence" value="ECO:0000318"/>
    <property type="project" value="GO_Central"/>
</dbReference>
<dbReference type="InterPro" id="IPR013295">
    <property type="entry name" value="MAL"/>
</dbReference>
<dbReference type="InterPro" id="IPR008253">
    <property type="entry name" value="Marvel"/>
</dbReference>
<dbReference type="InterPro" id="IPR050578">
    <property type="entry name" value="MARVEL-CKLF_proteins"/>
</dbReference>
<dbReference type="PANTHER" id="PTHR22776">
    <property type="entry name" value="MARVEL-CONTAINING POTENTIAL LIPID RAFT-ASSOCIATED PROTEIN"/>
    <property type="match status" value="1"/>
</dbReference>
<dbReference type="PANTHER" id="PTHR22776:SF42">
    <property type="entry name" value="PROTEIN MAL2"/>
    <property type="match status" value="1"/>
</dbReference>
<dbReference type="Pfam" id="PF01284">
    <property type="entry name" value="MARVEL"/>
    <property type="match status" value="1"/>
</dbReference>
<dbReference type="PRINTS" id="PR01884">
    <property type="entry name" value="MALPROTEIN"/>
</dbReference>
<dbReference type="PROSITE" id="PS51225">
    <property type="entry name" value="MARVEL"/>
    <property type="match status" value="1"/>
</dbReference>
<name>MAL2_BOVIN</name>
<keyword id="KW-1003">Cell membrane</keyword>
<keyword id="KW-0325">Glycoprotein</keyword>
<keyword id="KW-0472">Membrane</keyword>
<keyword id="KW-1185">Reference proteome</keyword>
<keyword id="KW-0812">Transmembrane</keyword>
<keyword id="KW-1133">Transmembrane helix</keyword>
<accession>A2VE13</accession>
<protein>
    <recommendedName>
        <fullName>Protein MAL2</fullName>
    </recommendedName>
</protein>
<gene>
    <name type="primary">MAL2</name>
</gene>